<organism>
    <name type="scientific">Homo sapiens</name>
    <name type="common">Human</name>
    <dbReference type="NCBI Taxonomy" id="9606"/>
    <lineage>
        <taxon>Eukaryota</taxon>
        <taxon>Metazoa</taxon>
        <taxon>Chordata</taxon>
        <taxon>Craniata</taxon>
        <taxon>Vertebrata</taxon>
        <taxon>Euteleostomi</taxon>
        <taxon>Mammalia</taxon>
        <taxon>Eutheria</taxon>
        <taxon>Euarchontoglires</taxon>
        <taxon>Primates</taxon>
        <taxon>Haplorrhini</taxon>
        <taxon>Catarrhini</taxon>
        <taxon>Hominidae</taxon>
        <taxon>Homo</taxon>
    </lineage>
</organism>
<protein>
    <recommendedName>
        <fullName evidence="1">Protein FAM25A</fullName>
    </recommendedName>
</protein>
<gene>
    <name evidence="2" type="primary">FAM25A</name>
</gene>
<proteinExistence type="evidence at protein level"/>
<accession>B3EWG3</accession>
<accession>B2RV02</accession>
<accession>Q5VTM1</accession>
<name>FM25A_HUMAN</name>
<feature type="chain" id="PRO_0000270919" description="Protein FAM25A">
    <location>
        <begin position="1"/>
        <end position="89"/>
    </location>
</feature>
<feature type="sequence variant" id="VAR_054062" description="In dbSNP:rs7079587.">
    <original>V</original>
    <variation>L</variation>
    <location>
        <position position="35"/>
    </location>
</feature>
<evidence type="ECO:0000305" key="1"/>
<evidence type="ECO:0000312" key="2">
    <source>
        <dbReference type="HGNC" id="HGNC:23436"/>
    </source>
</evidence>
<reference key="1">
    <citation type="journal article" date="2004" name="Nature">
        <title>The DNA sequence and comparative analysis of human chromosome 10.</title>
        <authorList>
            <person name="Deloukas P."/>
            <person name="Earthrowl M.E."/>
            <person name="Grafham D.V."/>
            <person name="Rubenfield M."/>
            <person name="French L."/>
            <person name="Steward C.A."/>
            <person name="Sims S.K."/>
            <person name="Jones M.C."/>
            <person name="Searle S."/>
            <person name="Scott C."/>
            <person name="Howe K."/>
            <person name="Hunt S.E."/>
            <person name="Andrews T.D."/>
            <person name="Gilbert J.G.R."/>
            <person name="Swarbreck D."/>
            <person name="Ashurst J.L."/>
            <person name="Taylor A."/>
            <person name="Battles J."/>
            <person name="Bird C.P."/>
            <person name="Ainscough R."/>
            <person name="Almeida J.P."/>
            <person name="Ashwell R.I.S."/>
            <person name="Ambrose K.D."/>
            <person name="Babbage A.K."/>
            <person name="Bagguley C.L."/>
            <person name="Bailey J."/>
            <person name="Banerjee R."/>
            <person name="Bates K."/>
            <person name="Beasley H."/>
            <person name="Bray-Allen S."/>
            <person name="Brown A.J."/>
            <person name="Brown J.Y."/>
            <person name="Burford D.C."/>
            <person name="Burrill W."/>
            <person name="Burton J."/>
            <person name="Cahill P."/>
            <person name="Camire D."/>
            <person name="Carter N.P."/>
            <person name="Chapman J.C."/>
            <person name="Clark S.Y."/>
            <person name="Clarke G."/>
            <person name="Clee C.M."/>
            <person name="Clegg S."/>
            <person name="Corby N."/>
            <person name="Coulson A."/>
            <person name="Dhami P."/>
            <person name="Dutta I."/>
            <person name="Dunn M."/>
            <person name="Faulkner L."/>
            <person name="Frankish A."/>
            <person name="Frankland J.A."/>
            <person name="Garner P."/>
            <person name="Garnett J."/>
            <person name="Gribble S."/>
            <person name="Griffiths C."/>
            <person name="Grocock R."/>
            <person name="Gustafson E."/>
            <person name="Hammond S."/>
            <person name="Harley J.L."/>
            <person name="Hart E."/>
            <person name="Heath P.D."/>
            <person name="Ho T.P."/>
            <person name="Hopkins B."/>
            <person name="Horne J."/>
            <person name="Howden P.J."/>
            <person name="Huckle E."/>
            <person name="Hynds C."/>
            <person name="Johnson C."/>
            <person name="Johnson D."/>
            <person name="Kana A."/>
            <person name="Kay M."/>
            <person name="Kimberley A.M."/>
            <person name="Kershaw J.K."/>
            <person name="Kokkinaki M."/>
            <person name="Laird G.K."/>
            <person name="Lawlor S."/>
            <person name="Lee H.M."/>
            <person name="Leongamornlert D.A."/>
            <person name="Laird G."/>
            <person name="Lloyd C."/>
            <person name="Lloyd D.M."/>
            <person name="Loveland J."/>
            <person name="Lovell J."/>
            <person name="McLaren S."/>
            <person name="McLay K.E."/>
            <person name="McMurray A."/>
            <person name="Mashreghi-Mohammadi M."/>
            <person name="Matthews L."/>
            <person name="Milne S."/>
            <person name="Nickerson T."/>
            <person name="Nguyen M."/>
            <person name="Overton-Larty E."/>
            <person name="Palmer S.A."/>
            <person name="Pearce A.V."/>
            <person name="Peck A.I."/>
            <person name="Pelan S."/>
            <person name="Phillimore B."/>
            <person name="Porter K."/>
            <person name="Rice C.M."/>
            <person name="Rogosin A."/>
            <person name="Ross M.T."/>
            <person name="Sarafidou T."/>
            <person name="Sehra H.K."/>
            <person name="Shownkeen R."/>
            <person name="Skuce C.D."/>
            <person name="Smith M."/>
            <person name="Standring L."/>
            <person name="Sycamore N."/>
            <person name="Tester J."/>
            <person name="Thorpe A."/>
            <person name="Torcasso W."/>
            <person name="Tracey A."/>
            <person name="Tromans A."/>
            <person name="Tsolas J."/>
            <person name="Wall M."/>
            <person name="Walsh J."/>
            <person name="Wang H."/>
            <person name="Weinstock K."/>
            <person name="West A.P."/>
            <person name="Willey D.L."/>
            <person name="Whitehead S.L."/>
            <person name="Wilming L."/>
            <person name="Wray P.W."/>
            <person name="Young L."/>
            <person name="Chen Y."/>
            <person name="Lovering R.C."/>
            <person name="Moschonas N.K."/>
            <person name="Siebert R."/>
            <person name="Fechtel K."/>
            <person name="Bentley D."/>
            <person name="Durbin R.M."/>
            <person name="Hubbard T."/>
            <person name="Doucette-Stamm L."/>
            <person name="Beck S."/>
            <person name="Smith D.R."/>
            <person name="Rogers J."/>
        </authorList>
    </citation>
    <scope>NUCLEOTIDE SEQUENCE [LARGE SCALE GENOMIC DNA]</scope>
</reference>
<reference key="2">
    <citation type="submission" date="2005-09" db="EMBL/GenBank/DDBJ databases">
        <authorList>
            <person name="Mural R.J."/>
            <person name="Istrail S."/>
            <person name="Sutton G.G."/>
            <person name="Florea L."/>
            <person name="Halpern A.L."/>
            <person name="Mobarry C.M."/>
            <person name="Lippert R."/>
            <person name="Walenz B."/>
            <person name="Shatkay H."/>
            <person name="Dew I."/>
            <person name="Miller J.R."/>
            <person name="Flanigan M.J."/>
            <person name="Edwards N.J."/>
            <person name="Bolanos R."/>
            <person name="Fasulo D."/>
            <person name="Halldorsson B.V."/>
            <person name="Hannenhalli S."/>
            <person name="Turner R."/>
            <person name="Yooseph S."/>
            <person name="Lu F."/>
            <person name="Nusskern D.R."/>
            <person name="Shue B.C."/>
            <person name="Zheng X.H."/>
            <person name="Zhong F."/>
            <person name="Delcher A.L."/>
            <person name="Huson D.H."/>
            <person name="Kravitz S.A."/>
            <person name="Mouchard L."/>
            <person name="Reinert K."/>
            <person name="Remington K.A."/>
            <person name="Clark A.G."/>
            <person name="Waterman M.S."/>
            <person name="Eichler E.E."/>
            <person name="Adams M.D."/>
            <person name="Hunkapiller M.W."/>
            <person name="Myers E.W."/>
            <person name="Venter J.C."/>
        </authorList>
    </citation>
    <scope>NUCLEOTIDE SEQUENCE [LARGE SCALE GENOMIC DNA]</scope>
</reference>
<reference key="3">
    <citation type="journal article" date="2004" name="Genome Res.">
        <title>The status, quality, and expansion of the NIH full-length cDNA project: the Mammalian Gene Collection (MGC).</title>
        <authorList>
            <consortium name="The MGC Project Team"/>
        </authorList>
    </citation>
    <scope>NUCLEOTIDE SEQUENCE [LARGE SCALE MRNA]</scope>
</reference>
<comment type="interaction">
    <interactant intactId="EBI-14240149">
        <id>B3EWG3</id>
    </interactant>
    <interactant intactId="EBI-12902762">
        <id>Q8N2F6-2</id>
        <label>ARMC10</label>
    </interactant>
    <organismsDiffer>false</organismsDiffer>
    <experiments>5</experiments>
</comment>
<comment type="interaction">
    <interactant intactId="EBI-14240149">
        <id>B3EWG3</id>
    </interactant>
    <interactant intactId="EBI-717832">
        <id>Q9UH62</id>
        <label>ARMCX3</label>
    </interactant>
    <organismsDiffer>false</organismsDiffer>
    <experiments>3</experiments>
</comment>
<comment type="interaction">
    <interactant intactId="EBI-14240149">
        <id>B3EWG3</id>
    </interactant>
    <interactant intactId="EBI-6570716">
        <id>Q9P0S2</id>
        <label>COX16</label>
    </interactant>
    <organismsDiffer>false</organismsDiffer>
    <experiments>3</experiments>
</comment>
<comment type="interaction">
    <interactant intactId="EBI-14240149">
        <id>B3EWG3</id>
    </interactant>
    <interactant intactId="EBI-713346">
        <id>P21695</id>
        <label>GPD1</label>
    </interactant>
    <organismsDiffer>false</organismsDiffer>
    <experiments>3</experiments>
</comment>
<comment type="interaction">
    <interactant intactId="EBI-14240149">
        <id>B3EWG3</id>
    </interactant>
    <interactant intactId="EBI-1222221">
        <id>P15814</id>
        <label>IGLL1</label>
    </interactant>
    <organismsDiffer>false</organismsDiffer>
    <experiments>3</experiments>
</comment>
<comment type="interaction">
    <interactant intactId="EBI-14240149">
        <id>B3EWG3</id>
    </interactant>
    <interactant intactId="EBI-9477654">
        <id>Q6PF15</id>
        <label>KLHL35</label>
    </interactant>
    <organismsDiffer>false</organismsDiffer>
    <experiments>3</experiments>
</comment>
<comment type="interaction">
    <interactant intactId="EBI-14240149">
        <id>B3EWG3</id>
    </interactant>
    <interactant intactId="EBI-1052433">
        <id>P31025</id>
        <label>LCN1</label>
    </interactant>
    <organismsDiffer>false</organismsDiffer>
    <experiments>3</experiments>
</comment>
<comment type="interaction">
    <interactant intactId="EBI-14240149">
        <id>B3EWG3</id>
    </interactant>
    <interactant intactId="EBI-11911016">
        <id>P80188</id>
        <label>LCN2</label>
    </interactant>
    <organismsDiffer>false</organismsDiffer>
    <experiments>3</experiments>
</comment>
<comment type="interaction">
    <interactant intactId="EBI-14240149">
        <id>B3EWG3</id>
    </interactant>
    <interactant intactId="EBI-740987">
        <id>Q9NQG6</id>
        <label>MIEF1</label>
    </interactant>
    <organismsDiffer>false</organismsDiffer>
    <experiments>3</experiments>
</comment>
<comment type="interaction">
    <interactant intactId="EBI-14240149">
        <id>B3EWG3</id>
    </interactant>
    <interactant intactId="EBI-11988931">
        <id>Q96C03-3</id>
        <label>MIEF2</label>
    </interactant>
    <organismsDiffer>false</organismsDiffer>
    <experiments>3</experiments>
</comment>
<comment type="interaction">
    <interactant intactId="EBI-14240149">
        <id>B3EWG3</id>
    </interactant>
    <interactant intactId="EBI-953909">
        <id>P45877</id>
        <label>PPIC</label>
    </interactant>
    <organismsDiffer>false</organismsDiffer>
    <experiments>3</experiments>
</comment>
<comment type="interaction">
    <interactant intactId="EBI-14240149">
        <id>B3EWG3</id>
    </interactant>
    <interactant intactId="EBI-5544229">
        <id>P30405</id>
        <label>PPIF</label>
    </interactant>
    <organismsDiffer>false</organismsDiffer>
    <experiments>3</experiments>
</comment>
<comment type="interaction">
    <interactant intactId="EBI-14240149">
        <id>B3EWG3</id>
    </interactant>
    <interactant intactId="EBI-352877">
        <id>P06703</id>
        <label>S100A6</label>
    </interactant>
    <organismsDiffer>false</organismsDiffer>
    <experiments>3</experiments>
</comment>
<comment type="interaction">
    <interactant intactId="EBI-14240149">
        <id>B3EWG3</id>
    </interactant>
    <interactant intactId="EBI-2822329">
        <id>Q13596</id>
        <label>SNX1</label>
    </interactant>
    <organismsDiffer>false</organismsDiffer>
    <experiments>3</experiments>
</comment>
<comment type="interaction">
    <interactant intactId="EBI-14240149">
        <id>B3EWG3</id>
    </interactant>
    <interactant intactId="EBI-12842466">
        <id>Q9Y2W6</id>
        <label>TDRKH</label>
    </interactant>
    <organismsDiffer>false</organismsDiffer>
    <experiments>3</experiments>
</comment>
<comment type="interaction">
    <interactant intactId="EBI-14240149">
        <id>B3EWG3</id>
    </interactant>
    <interactant intactId="EBI-11954062">
        <id>Q6UXN7</id>
        <label>TOMM20L</label>
    </interactant>
    <organismsDiffer>false</organismsDiffer>
    <experiments>3</experiments>
</comment>
<comment type="interaction">
    <interactant intactId="EBI-14240149">
        <id>B3EWG3</id>
    </interactant>
    <interactant intactId="EBI-10210710">
        <id>P49638</id>
        <label>TTPA</label>
    </interactant>
    <organismsDiffer>false</organismsDiffer>
    <experiments>3</experiments>
</comment>
<comment type="interaction">
    <interactant intactId="EBI-14240149">
        <id>B3EWG3</id>
    </interactant>
    <interactant intactId="EBI-725171">
        <id>Q9H8U3</id>
        <label>ZFAND3</label>
    </interactant>
    <organismsDiffer>false</organismsDiffer>
    <experiments>3</experiments>
</comment>
<comment type="similarity">
    <text evidence="1">Belongs to the FAM25 family.</text>
</comment>
<dbReference type="EMBL" id="AL136982">
    <property type="status" value="NOT_ANNOTATED_CDS"/>
    <property type="molecule type" value="Genomic_DNA"/>
</dbReference>
<dbReference type="EMBL" id="CH471142">
    <property type="protein sequence ID" value="EAW80306.1"/>
    <property type="molecule type" value="Genomic_DNA"/>
</dbReference>
<dbReference type="EMBL" id="BC171878">
    <property type="protein sequence ID" value="AAI71878.1"/>
    <property type="molecule type" value="mRNA"/>
</dbReference>
<dbReference type="EMBL" id="BC171915">
    <property type="protein sequence ID" value="AAI71915.1"/>
    <property type="molecule type" value="mRNA"/>
</dbReference>
<dbReference type="CCDS" id="CCDS44451.1"/>
<dbReference type="RefSeq" id="NP_001131021.1">
    <property type="nucleotide sequence ID" value="NM_001137549.1"/>
</dbReference>
<dbReference type="RefSeq" id="NP_001139629.1">
    <property type="nucleotide sequence ID" value="NM_001146157.3"/>
</dbReference>
<dbReference type="SMR" id="B3EWG3"/>
<dbReference type="BioGRID" id="135986">
    <property type="interactions" value="21"/>
</dbReference>
<dbReference type="BioGRID" id="568554">
    <property type="interactions" value="18"/>
</dbReference>
<dbReference type="BioGRID" id="569275">
    <property type="interactions" value="25"/>
</dbReference>
<dbReference type="FunCoup" id="B3EWG3">
    <property type="interactions" value="3"/>
</dbReference>
<dbReference type="IntAct" id="B3EWG3">
    <property type="interactions" value="19"/>
</dbReference>
<dbReference type="STRING" id="9606.ENSP00000342790"/>
<dbReference type="BioMuta" id="FAM25A"/>
<dbReference type="jPOST" id="B3EWG3"/>
<dbReference type="MassIVE" id="B3EWG3"/>
<dbReference type="PaxDb" id="9606-ENSP00000342790"/>
<dbReference type="PeptideAtlas" id="B3EWG3"/>
<dbReference type="PRIDE" id="B3EWG3"/>
<dbReference type="Pumba" id="B3EWG3"/>
<dbReference type="Antibodypedia" id="67835">
    <property type="antibodies" value="9 antibodies from 6 providers"/>
</dbReference>
<dbReference type="DNASU" id="644054"/>
<dbReference type="Ensembl" id="ENST00000343959.5">
    <property type="protein sequence ID" value="ENSP00000342790.4"/>
    <property type="gene ID" value="ENSG00000188100.9"/>
</dbReference>
<dbReference type="GeneID" id="100133093"/>
<dbReference type="GeneID" id="643161"/>
<dbReference type="KEGG" id="hsa:100133093"/>
<dbReference type="KEGG" id="hsa:643161"/>
<dbReference type="KEGG" id="hsa:644054"/>
<dbReference type="MANE-Select" id="ENST00000343959.5">
    <property type="protein sequence ID" value="ENSP00000342790.4"/>
    <property type="RefSeq nucleotide sequence ID" value="NM_001146157.3"/>
    <property type="RefSeq protein sequence ID" value="NP_001139629.1"/>
</dbReference>
<dbReference type="AGR" id="HGNC:23436"/>
<dbReference type="AGR" id="HGNC:23586"/>
<dbReference type="AGR" id="HGNC:23590"/>
<dbReference type="CTD" id="100133093"/>
<dbReference type="CTD" id="643161"/>
<dbReference type="CTD" id="644054"/>
<dbReference type="GeneCards" id="FAM25A"/>
<dbReference type="HGNC" id="HGNC:23436">
    <property type="gene designation" value="FAM25A"/>
</dbReference>
<dbReference type="HPA" id="ENSG00000188100">
    <property type="expression patterns" value="Tissue enhanced (cervix, esophagus, salivary gland, skin, vagina)"/>
</dbReference>
<dbReference type="neXtProt" id="NX_B3EWG3"/>
<dbReference type="OpenTargets" id="ENSG00000188100"/>
<dbReference type="OpenTargets" id="ENSG00000276430"/>
<dbReference type="VEuPathDB" id="HostDB:ENSG00000188100"/>
<dbReference type="eggNOG" id="ENOG502SUWZ">
    <property type="taxonomic scope" value="Eukaryota"/>
</dbReference>
<dbReference type="HOGENOM" id="CLU_2454157_0_0_1"/>
<dbReference type="InParanoid" id="B3EWG3"/>
<dbReference type="OMA" id="AITHVME"/>
<dbReference type="PAN-GO" id="B3EWG3">
    <property type="GO annotations" value="0 GO annotations based on evolutionary models"/>
</dbReference>
<dbReference type="PhylomeDB" id="B3EWG3"/>
<dbReference type="TreeFam" id="TF336933"/>
<dbReference type="PathwayCommons" id="B3EWG3"/>
<dbReference type="BioGRID-ORCS" id="100133093">
    <property type="hits" value="365 hits in 652 CRISPR screens"/>
</dbReference>
<dbReference type="BioGRID-ORCS" id="643161">
    <property type="hits" value="134 hits in 1045 CRISPR screens"/>
</dbReference>
<dbReference type="BioGRID-ORCS" id="644054">
    <property type="hits" value="23 hits in 306 CRISPR screens"/>
</dbReference>
<dbReference type="Pharos" id="B3EWG3">
    <property type="development level" value="Tdark"/>
</dbReference>
<dbReference type="PRO" id="PR:B3EWG3"/>
<dbReference type="Proteomes" id="UP000005640">
    <property type="component" value="Chromosome 10"/>
</dbReference>
<dbReference type="RNAct" id="B3EWG3">
    <property type="molecule type" value="protein"/>
</dbReference>
<dbReference type="Bgee" id="ENSG00000188100">
    <property type="expression patterns" value="Expressed in lower esophagus mucosa and 77 other cell types or tissues"/>
</dbReference>
<dbReference type="InterPro" id="IPR023243">
    <property type="entry name" value="FAM25"/>
</dbReference>
<dbReference type="PANTHER" id="PTHR34994">
    <property type="entry name" value="PROTEIN FAM25A-RELATED"/>
    <property type="match status" value="1"/>
</dbReference>
<dbReference type="PANTHER" id="PTHR34994:SF1">
    <property type="entry name" value="PROTEIN FAM25A-RELATED"/>
    <property type="match status" value="1"/>
</dbReference>
<dbReference type="Pfam" id="PF15825">
    <property type="entry name" value="FAM25"/>
    <property type="match status" value="1"/>
</dbReference>
<dbReference type="PRINTS" id="PR02048">
    <property type="entry name" value="PROTEINF25"/>
</dbReference>
<sequence>MLGGLGKLAAEGLAHRTEKATEGAIHAVEEVVKEVVGHAKETGEKAIAEAIKKAQESGDKKMKEITETVTNTVTNAITHAAESLDKLGQ</sequence>
<keyword id="KW-1185">Reference proteome</keyword>